<sequence>MARGLRGLPRRGLWLLLVNHLFLATACQDTDHAALLRKYCLPQFQVDMEAIGKALWCDWDKTIGSYKDLSDCTRLVAQRLDCFWPNAAVDKFFLGVHQQYFRNCPVSGRALQDPPSSVLCPFIVVPILATLLMTALVVWRSKRPEGIV</sequence>
<organism>
    <name type="scientific">Sus scrofa</name>
    <name type="common">Pig</name>
    <dbReference type="NCBI Taxonomy" id="9823"/>
    <lineage>
        <taxon>Eukaryota</taxon>
        <taxon>Metazoa</taxon>
        <taxon>Chordata</taxon>
        <taxon>Craniata</taxon>
        <taxon>Vertebrata</taxon>
        <taxon>Euteleostomi</taxon>
        <taxon>Mammalia</taxon>
        <taxon>Eutheria</taxon>
        <taxon>Laurasiatheria</taxon>
        <taxon>Artiodactyla</taxon>
        <taxon>Suina</taxon>
        <taxon>Suidae</taxon>
        <taxon>Sus</taxon>
    </lineage>
</organism>
<dbReference type="EMBL" id="AB090163">
    <property type="protein sequence ID" value="BAC54961.1"/>
    <property type="molecule type" value="mRNA"/>
</dbReference>
<dbReference type="RefSeq" id="NP_999364.1">
    <property type="nucleotide sequence ID" value="NM_214199.2"/>
</dbReference>
<dbReference type="SMR" id="Q867C0"/>
<dbReference type="FunCoup" id="Q867C0">
    <property type="interactions" value="344"/>
</dbReference>
<dbReference type="STRING" id="9823.ENSSSCP00000017303"/>
<dbReference type="BindingDB" id="Q867C0"/>
<dbReference type="PaxDb" id="9823-ENSSSCP00000017303"/>
<dbReference type="Ensembl" id="ENSSSCT00000017784.5">
    <property type="protein sequence ID" value="ENSSSCP00000017303.5"/>
    <property type="gene ID" value="ENSSSCG00000016331.5"/>
</dbReference>
<dbReference type="Ensembl" id="ENSSSCT00025105211.1">
    <property type="protein sequence ID" value="ENSSSCP00025046957.1"/>
    <property type="gene ID" value="ENSSSCG00025076077.1"/>
</dbReference>
<dbReference type="Ensembl" id="ENSSSCT00035032207.1">
    <property type="protein sequence ID" value="ENSSSCP00035012674.1"/>
    <property type="gene ID" value="ENSSSCG00035024488.1"/>
</dbReference>
<dbReference type="Ensembl" id="ENSSSCT00045019551.1">
    <property type="protein sequence ID" value="ENSSSCP00045013407.1"/>
    <property type="gene ID" value="ENSSSCG00045011539.1"/>
</dbReference>
<dbReference type="Ensembl" id="ENSSSCT00050038715.1">
    <property type="protein sequence ID" value="ENSSSCP00050016028.1"/>
    <property type="gene ID" value="ENSSSCG00050028796.1"/>
</dbReference>
<dbReference type="Ensembl" id="ENSSSCT00055045505.1">
    <property type="protein sequence ID" value="ENSSSCP00055036271.1"/>
    <property type="gene ID" value="ENSSSCG00055023131.1"/>
</dbReference>
<dbReference type="Ensembl" id="ENSSSCT00065099945.1">
    <property type="protein sequence ID" value="ENSSSCP00065043891.1"/>
    <property type="gene ID" value="ENSSSCG00065072712.1"/>
</dbReference>
<dbReference type="Ensembl" id="ENSSSCT00070013118.1">
    <property type="protein sequence ID" value="ENSSSCP00070010807.1"/>
    <property type="gene ID" value="ENSSSCG00070006833.1"/>
</dbReference>
<dbReference type="Ensembl" id="ENSSSCT00085016808">
    <property type="protein sequence ID" value="ENSSSCP00085011901"/>
    <property type="gene ID" value="ENSSSCG00085008918"/>
</dbReference>
<dbReference type="Ensembl" id="ENSSSCT00105074683">
    <property type="protein sequence ID" value="ENSSSCP00105052889"/>
    <property type="gene ID" value="ENSSSCG00105039176"/>
</dbReference>
<dbReference type="Ensembl" id="ENSSSCT00115029194">
    <property type="protein sequence ID" value="ENSSSCP00115027709"/>
    <property type="gene ID" value="ENSSSCG00115016655"/>
</dbReference>
<dbReference type="Ensembl" id="ENSSSCT00130048894">
    <property type="protein sequence ID" value="ENSSSCP00130034554"/>
    <property type="gene ID" value="ENSSSCG00130025208"/>
</dbReference>
<dbReference type="GeneID" id="397401"/>
<dbReference type="KEGG" id="ssc:397401"/>
<dbReference type="CTD" id="10267"/>
<dbReference type="VGNC" id="VGNC:96530">
    <property type="gene designation" value="RAMP1"/>
</dbReference>
<dbReference type="eggNOG" id="ENOG502S0TC">
    <property type="taxonomic scope" value="Eukaryota"/>
</dbReference>
<dbReference type="GeneTree" id="ENSGT00940000159224"/>
<dbReference type="InParanoid" id="Q867C0"/>
<dbReference type="OMA" id="CYWPNRM"/>
<dbReference type="OrthoDB" id="10007519at2759"/>
<dbReference type="Reactome" id="R-SSC-418555">
    <property type="pathway name" value="G alpha (s) signalling events"/>
</dbReference>
<dbReference type="Reactome" id="R-SSC-419812">
    <property type="pathway name" value="Calcitonin-like ligand receptors"/>
</dbReference>
<dbReference type="Proteomes" id="UP000008227">
    <property type="component" value="Chromosome 15"/>
</dbReference>
<dbReference type="Proteomes" id="UP000314985">
    <property type="component" value="Chromosome 15"/>
</dbReference>
<dbReference type="Proteomes" id="UP000694570">
    <property type="component" value="Unplaced"/>
</dbReference>
<dbReference type="Proteomes" id="UP000694571">
    <property type="component" value="Unplaced"/>
</dbReference>
<dbReference type="Proteomes" id="UP000694720">
    <property type="component" value="Unplaced"/>
</dbReference>
<dbReference type="Proteomes" id="UP000694722">
    <property type="component" value="Unplaced"/>
</dbReference>
<dbReference type="Proteomes" id="UP000694723">
    <property type="component" value="Unplaced"/>
</dbReference>
<dbReference type="Proteomes" id="UP000694724">
    <property type="component" value="Unplaced"/>
</dbReference>
<dbReference type="Proteomes" id="UP000694725">
    <property type="component" value="Unplaced"/>
</dbReference>
<dbReference type="Proteomes" id="UP000694726">
    <property type="component" value="Unplaced"/>
</dbReference>
<dbReference type="Proteomes" id="UP000694727">
    <property type="component" value="Unplaced"/>
</dbReference>
<dbReference type="Proteomes" id="UP000694728">
    <property type="component" value="Unplaced"/>
</dbReference>
<dbReference type="GO" id="GO:0009986">
    <property type="term" value="C:cell surface"/>
    <property type="evidence" value="ECO:0007669"/>
    <property type="project" value="Ensembl"/>
</dbReference>
<dbReference type="GO" id="GO:1990406">
    <property type="term" value="C:CGRP receptor complex"/>
    <property type="evidence" value="ECO:0007669"/>
    <property type="project" value="Ensembl"/>
</dbReference>
<dbReference type="GO" id="GO:0097643">
    <property type="term" value="F:amylin receptor activity"/>
    <property type="evidence" value="ECO:0007669"/>
    <property type="project" value="Ensembl"/>
</dbReference>
<dbReference type="GO" id="GO:1990407">
    <property type="term" value="F:calcitonin gene-related peptide binding"/>
    <property type="evidence" value="ECO:0007669"/>
    <property type="project" value="Ensembl"/>
</dbReference>
<dbReference type="GO" id="GO:0001635">
    <property type="term" value="F:calcitonin gene-related peptide receptor activity"/>
    <property type="evidence" value="ECO:0007669"/>
    <property type="project" value="Ensembl"/>
</dbReference>
<dbReference type="GO" id="GO:0015026">
    <property type="term" value="F:coreceptor activity"/>
    <property type="evidence" value="ECO:0007669"/>
    <property type="project" value="Ensembl"/>
</dbReference>
<dbReference type="GO" id="GO:0007189">
    <property type="term" value="P:adenylate cyclase-activating G protein-coupled receptor signaling pathway"/>
    <property type="evidence" value="ECO:0000353"/>
    <property type="project" value="UniProtKB"/>
</dbReference>
<dbReference type="GO" id="GO:0150059">
    <property type="term" value="P:amylin receptor 1 signaling pathway"/>
    <property type="evidence" value="ECO:0007669"/>
    <property type="project" value="Ensembl"/>
</dbReference>
<dbReference type="GO" id="GO:0001525">
    <property type="term" value="P:angiogenesis"/>
    <property type="evidence" value="ECO:0007669"/>
    <property type="project" value="Ensembl"/>
</dbReference>
<dbReference type="GO" id="GO:1990408">
    <property type="term" value="P:calcitonin gene-related peptide receptor signaling pathway"/>
    <property type="evidence" value="ECO:0000353"/>
    <property type="project" value="UniProtKB"/>
</dbReference>
<dbReference type="GO" id="GO:0006816">
    <property type="term" value="P:calcium ion transport"/>
    <property type="evidence" value="ECO:0007669"/>
    <property type="project" value="Ensembl"/>
</dbReference>
<dbReference type="GO" id="GO:0006886">
    <property type="term" value="P:intracellular protein transport"/>
    <property type="evidence" value="ECO:0007669"/>
    <property type="project" value="InterPro"/>
</dbReference>
<dbReference type="GO" id="GO:0060050">
    <property type="term" value="P:positive regulation of protein glycosylation"/>
    <property type="evidence" value="ECO:0007669"/>
    <property type="project" value="Ensembl"/>
</dbReference>
<dbReference type="GO" id="GO:0072659">
    <property type="term" value="P:protein localization to plasma membrane"/>
    <property type="evidence" value="ECO:0007669"/>
    <property type="project" value="Ensembl"/>
</dbReference>
<dbReference type="GO" id="GO:0031623">
    <property type="term" value="P:receptor internalization"/>
    <property type="evidence" value="ECO:0007669"/>
    <property type="project" value="Ensembl"/>
</dbReference>
<dbReference type="GO" id="GO:0008277">
    <property type="term" value="P:regulation of G protein-coupled receptor signaling pathway"/>
    <property type="evidence" value="ECO:0007669"/>
    <property type="project" value="InterPro"/>
</dbReference>
<dbReference type="FunFam" id="1.10.150.510:FF:000002">
    <property type="entry name" value="Receptor activity-modifying protein 1"/>
    <property type="match status" value="1"/>
</dbReference>
<dbReference type="Gene3D" id="1.10.150.510">
    <property type="entry name" value="Receptor activity modifying family"/>
    <property type="match status" value="1"/>
</dbReference>
<dbReference type="InterPro" id="IPR006985">
    <property type="entry name" value="RAMP"/>
</dbReference>
<dbReference type="InterPro" id="IPR038126">
    <property type="entry name" value="RAMP_sf"/>
</dbReference>
<dbReference type="PANTHER" id="PTHR14076">
    <property type="entry name" value="RECEPTOR ACTIVITY MODIFYING PROTEIN RAMP"/>
    <property type="match status" value="1"/>
</dbReference>
<dbReference type="PANTHER" id="PTHR14076:SF3">
    <property type="entry name" value="RECEPTOR ACTIVITY-MODIFYING PROTEIN 1"/>
    <property type="match status" value="1"/>
</dbReference>
<dbReference type="Pfam" id="PF04901">
    <property type="entry name" value="RAMP"/>
    <property type="match status" value="1"/>
</dbReference>
<accession>Q867C0</accession>
<feature type="signal peptide" evidence="2">
    <location>
        <begin position="1"/>
        <end position="26"/>
    </location>
</feature>
<feature type="chain" id="PRO_0000250509" description="Receptor activity-modifying protein 1">
    <location>
        <begin position="27"/>
        <end position="148"/>
    </location>
</feature>
<feature type="topological domain" description="Extracellular" evidence="2">
    <location>
        <begin position="27"/>
        <end position="118"/>
    </location>
</feature>
<feature type="transmembrane region" description="Helical" evidence="1">
    <location>
        <begin position="119"/>
        <end position="140"/>
    </location>
</feature>
<feature type="topological domain" description="Cytoplasmic" evidence="2">
    <location>
        <begin position="141"/>
        <end position="148"/>
    </location>
</feature>
<feature type="disulfide bond">
    <location>
        <begin position="27"/>
        <end position="82"/>
    </location>
</feature>
<feature type="disulfide bond" evidence="1">
    <location>
        <begin position="40"/>
        <end position="72"/>
    </location>
</feature>
<feature type="disulfide bond" evidence="1">
    <location>
        <begin position="57"/>
        <end position="104"/>
    </location>
</feature>
<name>RAMP1_PIG</name>
<gene>
    <name type="primary">RAMP1</name>
</gene>
<protein>
    <recommendedName>
        <fullName>Receptor activity-modifying protein 1</fullName>
    </recommendedName>
</protein>
<comment type="function">
    <text evidence="1">Accessory protein that interacts with and modulates the function of G-protein coupled receptors including calcitonin gene-related peptide type 1 receptor (CALCRL) and calcitonin receptor (CALCR). Required for the transport of CALCRL to the plasma membrane. Together with CALCRL, form the receptor complex for the calcitonin gene-related peptides CGRP1/CALCA and CGRP2/CALCB. Together with CALCR, form the AMYR1 receptor complex for amylin/IAPP and CGRP1/CALCA.</text>
</comment>
<comment type="subunit">
    <text evidence="1">Heterodimer of CALCRL and RAMP1; the interaction induces allosteric modulation of CALCRL function and CGRP1/CALCA and CGRP2/CALCB ligand specificity. Heterodimer of CALCR and RAMP1; interaction forms the AMYR1 receptor complex for amylin/IAPP and CGRP1/CALCA ligands.</text>
</comment>
<comment type="subcellular location">
    <subcellularLocation>
        <location evidence="1">Cell membrane</location>
        <topology evidence="1">Single-pass type I membrane protein</topology>
    </subcellularLocation>
</comment>
<comment type="similarity">
    <text evidence="3">Belongs to the RAMP family.</text>
</comment>
<keyword id="KW-1003">Cell membrane</keyword>
<keyword id="KW-1015">Disulfide bond</keyword>
<keyword id="KW-0472">Membrane</keyword>
<keyword id="KW-0675">Receptor</keyword>
<keyword id="KW-1185">Reference proteome</keyword>
<keyword id="KW-0732">Signal</keyword>
<keyword id="KW-0812">Transmembrane</keyword>
<keyword id="KW-1133">Transmembrane helix</keyword>
<keyword id="KW-0813">Transport</keyword>
<reference key="1">
    <citation type="submission" date="2002-08" db="EMBL/GenBank/DDBJ databases">
        <title>Specificity of porcine calcitonin receptor and calcitonin receptor-like receptor in the presence of receptor-activity-modifying proteins.</title>
        <authorList>
            <person name="Kikumoto K."/>
            <person name="Katafuchi T."/>
            <person name="Minamino N."/>
        </authorList>
    </citation>
    <scope>NUCLEOTIDE SEQUENCE [MRNA]</scope>
</reference>
<evidence type="ECO:0000250" key="1">
    <source>
        <dbReference type="UniProtKB" id="O60894"/>
    </source>
</evidence>
<evidence type="ECO:0000255" key="2"/>
<evidence type="ECO:0000305" key="3"/>
<proteinExistence type="evidence at protein level"/>